<proteinExistence type="inferred from homology"/>
<name>RL18_SALNS</name>
<reference key="1">
    <citation type="journal article" date="2011" name="J. Bacteriol.">
        <title>Comparative genomics of 28 Salmonella enterica isolates: evidence for CRISPR-mediated adaptive sublineage evolution.</title>
        <authorList>
            <person name="Fricke W.F."/>
            <person name="Mammel M.K."/>
            <person name="McDermott P.F."/>
            <person name="Tartera C."/>
            <person name="White D.G."/>
            <person name="Leclerc J.E."/>
            <person name="Ravel J."/>
            <person name="Cebula T.A."/>
        </authorList>
    </citation>
    <scope>NUCLEOTIDE SEQUENCE [LARGE SCALE GENOMIC DNA]</scope>
    <source>
        <strain>SL254</strain>
    </source>
</reference>
<evidence type="ECO:0000255" key="1">
    <source>
        <dbReference type="HAMAP-Rule" id="MF_01337"/>
    </source>
</evidence>
<evidence type="ECO:0000305" key="2"/>
<feature type="chain" id="PRO_1000142716" description="Large ribosomal subunit protein uL18">
    <location>
        <begin position="1"/>
        <end position="117"/>
    </location>
</feature>
<accession>B4SUS4</accession>
<gene>
    <name evidence="1" type="primary">rplR</name>
    <name type="ordered locus">SNSL254_A3693</name>
</gene>
<protein>
    <recommendedName>
        <fullName evidence="1">Large ribosomal subunit protein uL18</fullName>
    </recommendedName>
    <alternativeName>
        <fullName evidence="2">50S ribosomal protein L18</fullName>
    </alternativeName>
</protein>
<keyword id="KW-0687">Ribonucleoprotein</keyword>
<keyword id="KW-0689">Ribosomal protein</keyword>
<keyword id="KW-0694">RNA-binding</keyword>
<keyword id="KW-0699">rRNA-binding</keyword>
<dbReference type="EMBL" id="CP001113">
    <property type="protein sequence ID" value="ACF62935.1"/>
    <property type="molecule type" value="Genomic_DNA"/>
</dbReference>
<dbReference type="RefSeq" id="WP_000358956.1">
    <property type="nucleotide sequence ID" value="NZ_CCMR01000003.1"/>
</dbReference>
<dbReference type="SMR" id="B4SUS4"/>
<dbReference type="GeneID" id="93035747"/>
<dbReference type="KEGG" id="see:SNSL254_A3693"/>
<dbReference type="HOGENOM" id="CLU_098841_0_1_6"/>
<dbReference type="Proteomes" id="UP000008824">
    <property type="component" value="Chromosome"/>
</dbReference>
<dbReference type="GO" id="GO:0022625">
    <property type="term" value="C:cytosolic large ribosomal subunit"/>
    <property type="evidence" value="ECO:0007669"/>
    <property type="project" value="TreeGrafter"/>
</dbReference>
<dbReference type="GO" id="GO:0008097">
    <property type="term" value="F:5S rRNA binding"/>
    <property type="evidence" value="ECO:0007669"/>
    <property type="project" value="TreeGrafter"/>
</dbReference>
<dbReference type="GO" id="GO:0003735">
    <property type="term" value="F:structural constituent of ribosome"/>
    <property type="evidence" value="ECO:0007669"/>
    <property type="project" value="InterPro"/>
</dbReference>
<dbReference type="GO" id="GO:0006412">
    <property type="term" value="P:translation"/>
    <property type="evidence" value="ECO:0007669"/>
    <property type="project" value="UniProtKB-UniRule"/>
</dbReference>
<dbReference type="CDD" id="cd00432">
    <property type="entry name" value="Ribosomal_L18_L5e"/>
    <property type="match status" value="1"/>
</dbReference>
<dbReference type="FunFam" id="3.30.420.100:FF:000001">
    <property type="entry name" value="50S ribosomal protein L18"/>
    <property type="match status" value="1"/>
</dbReference>
<dbReference type="Gene3D" id="3.30.420.100">
    <property type="match status" value="1"/>
</dbReference>
<dbReference type="HAMAP" id="MF_01337_B">
    <property type="entry name" value="Ribosomal_uL18_B"/>
    <property type="match status" value="1"/>
</dbReference>
<dbReference type="InterPro" id="IPR004389">
    <property type="entry name" value="Ribosomal_uL18_bac-type"/>
</dbReference>
<dbReference type="InterPro" id="IPR005484">
    <property type="entry name" value="Ribosomal_uL18_bac/euk"/>
</dbReference>
<dbReference type="NCBIfam" id="TIGR00060">
    <property type="entry name" value="L18_bact"/>
    <property type="match status" value="1"/>
</dbReference>
<dbReference type="PANTHER" id="PTHR12899">
    <property type="entry name" value="39S RIBOSOMAL PROTEIN L18, MITOCHONDRIAL"/>
    <property type="match status" value="1"/>
</dbReference>
<dbReference type="PANTHER" id="PTHR12899:SF3">
    <property type="entry name" value="LARGE RIBOSOMAL SUBUNIT PROTEIN UL18M"/>
    <property type="match status" value="1"/>
</dbReference>
<dbReference type="Pfam" id="PF00861">
    <property type="entry name" value="Ribosomal_L18p"/>
    <property type="match status" value="1"/>
</dbReference>
<dbReference type="SUPFAM" id="SSF53137">
    <property type="entry name" value="Translational machinery components"/>
    <property type="match status" value="1"/>
</dbReference>
<sequence>MDKKSARIRRATRARRKLKELGATRLVVHRTPRHIYAQVIAPNGSEVLVAASTVEKAIAEQLKYTGNKDAAAAVGKAVAERALEKGIKDVSFDRSGFQYHGRVQALADAAREAGLQF</sequence>
<organism>
    <name type="scientific">Salmonella newport (strain SL254)</name>
    <dbReference type="NCBI Taxonomy" id="423368"/>
    <lineage>
        <taxon>Bacteria</taxon>
        <taxon>Pseudomonadati</taxon>
        <taxon>Pseudomonadota</taxon>
        <taxon>Gammaproteobacteria</taxon>
        <taxon>Enterobacterales</taxon>
        <taxon>Enterobacteriaceae</taxon>
        <taxon>Salmonella</taxon>
    </lineage>
</organism>
<comment type="function">
    <text evidence="1">This is one of the proteins that bind and probably mediate the attachment of the 5S RNA into the large ribosomal subunit, where it forms part of the central protuberance.</text>
</comment>
<comment type="subunit">
    <text evidence="1">Part of the 50S ribosomal subunit; part of the 5S rRNA/L5/L18/L25 subcomplex. Contacts the 5S and 23S rRNAs.</text>
</comment>
<comment type="similarity">
    <text evidence="1">Belongs to the universal ribosomal protein uL18 family.</text>
</comment>